<proteinExistence type="inferred from homology"/>
<gene>
    <name evidence="1" type="primary">argP</name>
    <name type="synonym">iciA</name>
    <name type="ordered locus">STY3220</name>
    <name type="ordered locus">t2982</name>
</gene>
<feature type="chain" id="PRO_0000105646" description="HTH-type transcriptional regulator ArgP">
    <location>
        <begin position="1"/>
        <end position="297"/>
    </location>
</feature>
<feature type="domain" description="HTH lysR-type" evidence="1">
    <location>
        <begin position="4"/>
        <end position="60"/>
    </location>
</feature>
<feature type="DNA-binding region" description="H-T-H motif" evidence="1">
    <location>
        <begin position="21"/>
        <end position="40"/>
    </location>
</feature>
<accession>P58508</accession>
<evidence type="ECO:0000255" key="1">
    <source>
        <dbReference type="HAMAP-Rule" id="MF_00513"/>
    </source>
</evidence>
<evidence type="ECO:0000305" key="2"/>
<reference key="1">
    <citation type="journal article" date="2001" name="Nature">
        <title>Complete genome sequence of a multiple drug resistant Salmonella enterica serovar Typhi CT18.</title>
        <authorList>
            <person name="Parkhill J."/>
            <person name="Dougan G."/>
            <person name="James K.D."/>
            <person name="Thomson N.R."/>
            <person name="Pickard D."/>
            <person name="Wain J."/>
            <person name="Churcher C.M."/>
            <person name="Mungall K.L."/>
            <person name="Bentley S.D."/>
            <person name="Holden M.T.G."/>
            <person name="Sebaihia M."/>
            <person name="Baker S."/>
            <person name="Basham D."/>
            <person name="Brooks K."/>
            <person name="Chillingworth T."/>
            <person name="Connerton P."/>
            <person name="Cronin A."/>
            <person name="Davis P."/>
            <person name="Davies R.M."/>
            <person name="Dowd L."/>
            <person name="White N."/>
            <person name="Farrar J."/>
            <person name="Feltwell T."/>
            <person name="Hamlin N."/>
            <person name="Haque A."/>
            <person name="Hien T.T."/>
            <person name="Holroyd S."/>
            <person name="Jagels K."/>
            <person name="Krogh A."/>
            <person name="Larsen T.S."/>
            <person name="Leather S."/>
            <person name="Moule S."/>
            <person name="O'Gaora P."/>
            <person name="Parry C."/>
            <person name="Quail M.A."/>
            <person name="Rutherford K.M."/>
            <person name="Simmonds M."/>
            <person name="Skelton J."/>
            <person name="Stevens K."/>
            <person name="Whitehead S."/>
            <person name="Barrell B.G."/>
        </authorList>
    </citation>
    <scope>NUCLEOTIDE SEQUENCE [LARGE SCALE GENOMIC DNA]</scope>
    <source>
        <strain>CT18</strain>
    </source>
</reference>
<reference key="2">
    <citation type="journal article" date="2003" name="J. Bacteriol.">
        <title>Comparative genomics of Salmonella enterica serovar Typhi strains Ty2 and CT18.</title>
        <authorList>
            <person name="Deng W."/>
            <person name="Liou S.-R."/>
            <person name="Plunkett G. III"/>
            <person name="Mayhew G.F."/>
            <person name="Rose D.J."/>
            <person name="Burland V."/>
            <person name="Kodoyianni V."/>
            <person name="Schwartz D.C."/>
            <person name="Blattner F.R."/>
        </authorList>
    </citation>
    <scope>NUCLEOTIDE SEQUENCE [LARGE SCALE GENOMIC DNA]</scope>
    <source>
        <strain>ATCC 700931 / Ty2</strain>
    </source>
</reference>
<organism>
    <name type="scientific">Salmonella typhi</name>
    <dbReference type="NCBI Taxonomy" id="90370"/>
    <lineage>
        <taxon>Bacteria</taxon>
        <taxon>Pseudomonadati</taxon>
        <taxon>Pseudomonadota</taxon>
        <taxon>Gammaproteobacteria</taxon>
        <taxon>Enterobacterales</taxon>
        <taxon>Enterobacteriaceae</taxon>
        <taxon>Salmonella</taxon>
    </lineage>
</organism>
<protein>
    <recommendedName>
        <fullName evidence="1">HTH-type transcriptional regulator ArgP</fullName>
    </recommendedName>
</protein>
<name>ARGP_SALTI</name>
<keyword id="KW-0238">DNA-binding</keyword>
<keyword id="KW-0804">Transcription</keyword>
<keyword id="KW-0805">Transcription regulation</keyword>
<dbReference type="EMBL" id="AL513382">
    <property type="protein sequence ID" value="CAD02894.1"/>
    <property type="molecule type" value="Genomic_DNA"/>
</dbReference>
<dbReference type="EMBL" id="AE014613">
    <property type="protein sequence ID" value="AAO70534.1"/>
    <property type="molecule type" value="Genomic_DNA"/>
</dbReference>
<dbReference type="RefSeq" id="NP_457462.1">
    <property type="nucleotide sequence ID" value="NC_003198.1"/>
</dbReference>
<dbReference type="RefSeq" id="WP_000828344.1">
    <property type="nucleotide sequence ID" value="NZ_WSUR01000024.1"/>
</dbReference>
<dbReference type="SMR" id="P58508"/>
<dbReference type="STRING" id="220341.gene:17587096"/>
<dbReference type="KEGG" id="stt:t2982"/>
<dbReference type="KEGG" id="sty:STY3220"/>
<dbReference type="PATRIC" id="fig|220341.7.peg.3281"/>
<dbReference type="eggNOG" id="COG0583">
    <property type="taxonomic scope" value="Bacteria"/>
</dbReference>
<dbReference type="HOGENOM" id="CLU_063829_0_0_6"/>
<dbReference type="OMA" id="QGSTCCM"/>
<dbReference type="OrthoDB" id="3252676at2"/>
<dbReference type="Proteomes" id="UP000000541">
    <property type="component" value="Chromosome"/>
</dbReference>
<dbReference type="Proteomes" id="UP000002670">
    <property type="component" value="Chromosome"/>
</dbReference>
<dbReference type="GO" id="GO:0003677">
    <property type="term" value="F:DNA binding"/>
    <property type="evidence" value="ECO:0007669"/>
    <property type="project" value="UniProtKB-UniRule"/>
</dbReference>
<dbReference type="GO" id="GO:0003700">
    <property type="term" value="F:DNA-binding transcription factor activity"/>
    <property type="evidence" value="ECO:0007669"/>
    <property type="project" value="UniProtKB-UniRule"/>
</dbReference>
<dbReference type="CDD" id="cd08428">
    <property type="entry name" value="PBP2_IciA_ArgP"/>
    <property type="match status" value="1"/>
</dbReference>
<dbReference type="FunFam" id="1.10.10.10:FF:000061">
    <property type="entry name" value="HTH-type transcriptional regulator ArgP"/>
    <property type="match status" value="1"/>
</dbReference>
<dbReference type="FunFam" id="3.40.190.290:FF:000002">
    <property type="entry name" value="HTH-type transcriptional regulator ArgP"/>
    <property type="match status" value="1"/>
</dbReference>
<dbReference type="Gene3D" id="3.40.190.290">
    <property type="match status" value="1"/>
</dbReference>
<dbReference type="Gene3D" id="1.10.10.10">
    <property type="entry name" value="Winged helix-like DNA-binding domain superfamily/Winged helix DNA-binding domain"/>
    <property type="match status" value="1"/>
</dbReference>
<dbReference type="HAMAP" id="MF_00513">
    <property type="entry name" value="HTH_type_ArgP"/>
    <property type="match status" value="1"/>
</dbReference>
<dbReference type="InterPro" id="IPR017685">
    <property type="entry name" value="ArgP"/>
</dbReference>
<dbReference type="InterPro" id="IPR023490">
    <property type="entry name" value="ArgP_gammaproteobact"/>
</dbReference>
<dbReference type="InterPro" id="IPR050176">
    <property type="entry name" value="LTTR"/>
</dbReference>
<dbReference type="InterPro" id="IPR005119">
    <property type="entry name" value="LysR_subst-bd"/>
</dbReference>
<dbReference type="InterPro" id="IPR000847">
    <property type="entry name" value="Tscrpt_reg_HTH_LysR"/>
</dbReference>
<dbReference type="InterPro" id="IPR036388">
    <property type="entry name" value="WH-like_DNA-bd_sf"/>
</dbReference>
<dbReference type="InterPro" id="IPR036390">
    <property type="entry name" value="WH_DNA-bd_sf"/>
</dbReference>
<dbReference type="NCBIfam" id="TIGR03298">
    <property type="entry name" value="argP"/>
    <property type="match status" value="1"/>
</dbReference>
<dbReference type="NCBIfam" id="NF002964">
    <property type="entry name" value="PRK03635.1"/>
    <property type="match status" value="1"/>
</dbReference>
<dbReference type="NCBIfam" id="NF009888">
    <property type="entry name" value="PRK13348.1"/>
    <property type="match status" value="1"/>
</dbReference>
<dbReference type="PANTHER" id="PTHR30579:SF2">
    <property type="entry name" value="HTH-TYPE TRANSCRIPTIONAL REGULATOR ARGP"/>
    <property type="match status" value="1"/>
</dbReference>
<dbReference type="PANTHER" id="PTHR30579">
    <property type="entry name" value="TRANSCRIPTIONAL REGULATOR"/>
    <property type="match status" value="1"/>
</dbReference>
<dbReference type="Pfam" id="PF00126">
    <property type="entry name" value="HTH_1"/>
    <property type="match status" value="1"/>
</dbReference>
<dbReference type="Pfam" id="PF03466">
    <property type="entry name" value="LysR_substrate"/>
    <property type="match status" value="1"/>
</dbReference>
<dbReference type="PRINTS" id="PR00039">
    <property type="entry name" value="HTHLYSR"/>
</dbReference>
<dbReference type="SUPFAM" id="SSF53850">
    <property type="entry name" value="Periplasmic binding protein-like II"/>
    <property type="match status" value="1"/>
</dbReference>
<dbReference type="SUPFAM" id="SSF46785">
    <property type="entry name" value="Winged helix' DNA-binding domain"/>
    <property type="match status" value="1"/>
</dbReference>
<dbReference type="PROSITE" id="PS50931">
    <property type="entry name" value="HTH_LYSR"/>
    <property type="match status" value="1"/>
</dbReference>
<comment type="function">
    <text evidence="1">Controls the transcription of genes involved in arginine and lysine metabolism.</text>
</comment>
<comment type="subunit">
    <text evidence="1">Homodimer.</text>
</comment>
<comment type="similarity">
    <text evidence="2">Belongs to the LysR transcriptional regulatory family.</text>
</comment>
<sequence length="297" mass="33479">MKRPDYRTLQALDAVIRERGFERAAQKLCITQSAVSQRIKQLENMFGQPLLVRTVPPRPTEQGQKLLALLRQVELLEEEWLGDEQTGSTPLLLSLAVNADSLATWLLPALAPVLADSPIRLNLQVEDETRTQERLRRGEVVGAVSIQHQALPSCLVDKLGALDYLFVASKPFAERYFPNGVTRSSLLKAPAVAFDHLDDMHQAFLQQNFDLPPGSVPCHIVNSSEAFVQLARQGTACCMIPHLQIEKELESGELINLTPGLLQRRMLYWHRFAPESRMMRKVTDALLEYGHKVLRQD</sequence>